<proteinExistence type="inferred from homology"/>
<dbReference type="EC" id="3.1.21.7" evidence="1"/>
<dbReference type="EMBL" id="CP000857">
    <property type="protein sequence ID" value="ACN48066.1"/>
    <property type="molecule type" value="Genomic_DNA"/>
</dbReference>
<dbReference type="RefSeq" id="WP_000362359.1">
    <property type="nucleotide sequence ID" value="NC_012125.1"/>
</dbReference>
<dbReference type="SMR" id="C0Q2T0"/>
<dbReference type="KEGG" id="sei:SPC_3999"/>
<dbReference type="HOGENOM" id="CLU_047631_1_0_6"/>
<dbReference type="Proteomes" id="UP000001599">
    <property type="component" value="Chromosome"/>
</dbReference>
<dbReference type="GO" id="GO:0005737">
    <property type="term" value="C:cytoplasm"/>
    <property type="evidence" value="ECO:0007669"/>
    <property type="project" value="UniProtKB-SubCell"/>
</dbReference>
<dbReference type="GO" id="GO:0043737">
    <property type="term" value="F:deoxyribonuclease V activity"/>
    <property type="evidence" value="ECO:0007669"/>
    <property type="project" value="UniProtKB-UniRule"/>
</dbReference>
<dbReference type="GO" id="GO:0000287">
    <property type="term" value="F:magnesium ion binding"/>
    <property type="evidence" value="ECO:0007669"/>
    <property type="project" value="UniProtKB-UniRule"/>
</dbReference>
<dbReference type="GO" id="GO:0016891">
    <property type="term" value="F:RNA endonuclease activity, producing 5'-phosphomonoesters"/>
    <property type="evidence" value="ECO:0007669"/>
    <property type="project" value="TreeGrafter"/>
</dbReference>
<dbReference type="GO" id="GO:0003727">
    <property type="term" value="F:single-stranded RNA binding"/>
    <property type="evidence" value="ECO:0007669"/>
    <property type="project" value="TreeGrafter"/>
</dbReference>
<dbReference type="GO" id="GO:0006281">
    <property type="term" value="P:DNA repair"/>
    <property type="evidence" value="ECO:0007669"/>
    <property type="project" value="UniProtKB-UniRule"/>
</dbReference>
<dbReference type="CDD" id="cd06559">
    <property type="entry name" value="Endonuclease_V"/>
    <property type="match status" value="1"/>
</dbReference>
<dbReference type="FunFam" id="3.30.2170.10:FF:000001">
    <property type="entry name" value="Endonuclease V"/>
    <property type="match status" value="1"/>
</dbReference>
<dbReference type="Gene3D" id="3.30.2170.10">
    <property type="entry name" value="archaeoglobus fulgidus dsm 4304 superfamily"/>
    <property type="match status" value="1"/>
</dbReference>
<dbReference type="HAMAP" id="MF_00801">
    <property type="entry name" value="Endonuclease_5"/>
    <property type="match status" value="1"/>
</dbReference>
<dbReference type="InterPro" id="IPR007581">
    <property type="entry name" value="Endonuclease-V"/>
</dbReference>
<dbReference type="NCBIfam" id="NF008629">
    <property type="entry name" value="PRK11617.1"/>
    <property type="match status" value="1"/>
</dbReference>
<dbReference type="PANTHER" id="PTHR28511">
    <property type="entry name" value="ENDONUCLEASE V"/>
    <property type="match status" value="1"/>
</dbReference>
<dbReference type="PANTHER" id="PTHR28511:SF1">
    <property type="entry name" value="ENDONUCLEASE V"/>
    <property type="match status" value="1"/>
</dbReference>
<dbReference type="Pfam" id="PF04493">
    <property type="entry name" value="Endonuclease_5"/>
    <property type="match status" value="1"/>
</dbReference>
<keyword id="KW-0963">Cytoplasm</keyword>
<keyword id="KW-0227">DNA damage</keyword>
<keyword id="KW-0234">DNA repair</keyword>
<keyword id="KW-0255">Endonuclease</keyword>
<keyword id="KW-0378">Hydrolase</keyword>
<keyword id="KW-0460">Magnesium</keyword>
<keyword id="KW-0479">Metal-binding</keyword>
<keyword id="KW-0540">Nuclease</keyword>
<feature type="chain" id="PRO_1000148539" description="Endonuclease V">
    <location>
        <begin position="1"/>
        <end position="223"/>
    </location>
</feature>
<feature type="binding site" evidence="1">
    <location>
        <position position="35"/>
    </location>
    <ligand>
        <name>Mg(2+)</name>
        <dbReference type="ChEBI" id="CHEBI:18420"/>
    </ligand>
</feature>
<feature type="binding site" evidence="1">
    <location>
        <position position="103"/>
    </location>
    <ligand>
        <name>Mg(2+)</name>
        <dbReference type="ChEBI" id="CHEBI:18420"/>
    </ligand>
</feature>
<feature type="site" description="Interaction with target DNA" evidence="1">
    <location>
        <position position="73"/>
    </location>
</feature>
<protein>
    <recommendedName>
        <fullName evidence="1">Endonuclease V</fullName>
        <ecNumber evidence="1">3.1.21.7</ecNumber>
    </recommendedName>
    <alternativeName>
        <fullName evidence="1">Deoxyinosine 3'endonuclease</fullName>
    </alternativeName>
    <alternativeName>
        <fullName evidence="1">Deoxyribonuclease V</fullName>
        <shortName evidence="1">DNase V</shortName>
    </alternativeName>
</protein>
<accession>C0Q2T0</accession>
<reference key="1">
    <citation type="journal article" date="2009" name="PLoS ONE">
        <title>Salmonella paratyphi C: genetic divergence from Salmonella choleraesuis and pathogenic convergence with Salmonella typhi.</title>
        <authorList>
            <person name="Liu W.-Q."/>
            <person name="Feng Y."/>
            <person name="Wang Y."/>
            <person name="Zou Q.-H."/>
            <person name="Chen F."/>
            <person name="Guo J.-T."/>
            <person name="Peng Y.-H."/>
            <person name="Jin Y."/>
            <person name="Li Y.-G."/>
            <person name="Hu S.-N."/>
            <person name="Johnston R.N."/>
            <person name="Liu G.-R."/>
            <person name="Liu S.-L."/>
        </authorList>
    </citation>
    <scope>NUCLEOTIDE SEQUENCE [LARGE SCALE GENOMIC DNA]</scope>
    <source>
        <strain>RKS4594</strain>
    </source>
</reference>
<name>NFI_SALPC</name>
<organism>
    <name type="scientific">Salmonella paratyphi C (strain RKS4594)</name>
    <dbReference type="NCBI Taxonomy" id="476213"/>
    <lineage>
        <taxon>Bacteria</taxon>
        <taxon>Pseudomonadati</taxon>
        <taxon>Pseudomonadota</taxon>
        <taxon>Gammaproteobacteria</taxon>
        <taxon>Enterobacterales</taxon>
        <taxon>Enterobacteriaceae</taxon>
        <taxon>Salmonella</taxon>
    </lineage>
</organism>
<sequence>MDLASLRAQQIELASSVCREDRLDKDPPAFIGGADVGFEQGGEVTRAAMVLLKYPSLELVEYKVARIATTMPYIPGFLSFREYPALLAAWEQLSQKPDLLFVDGHGISHPRRLGVASHFGLLVDVPTIGVAKKRLCGKFEPLSAEPGALSPLMDKGEQLAWVWRSKARCNPLFIATGHRVSTDSALAWVQRCMKGYRLPEPTRWADAVASGRPAFVRWQEIQR</sequence>
<comment type="function">
    <text evidence="1">DNA repair enzyme involved in the repair of deaminated bases. Selectively cleaves double-stranded DNA at the second phosphodiester bond 3' to a deoxyinosine leaving behind the intact lesion on the nicked DNA.</text>
</comment>
<comment type="catalytic activity">
    <reaction evidence="1">
        <text>Endonucleolytic cleavage at apurinic or apyrimidinic sites to products with a 5'-phosphate.</text>
        <dbReference type="EC" id="3.1.21.7"/>
    </reaction>
</comment>
<comment type="cofactor">
    <cofactor evidence="1">
        <name>Mg(2+)</name>
        <dbReference type="ChEBI" id="CHEBI:18420"/>
    </cofactor>
</comment>
<comment type="subcellular location">
    <subcellularLocation>
        <location evidence="1">Cytoplasm</location>
    </subcellularLocation>
</comment>
<comment type="similarity">
    <text evidence="1">Belongs to the endonuclease V family.</text>
</comment>
<evidence type="ECO:0000255" key="1">
    <source>
        <dbReference type="HAMAP-Rule" id="MF_00801"/>
    </source>
</evidence>
<gene>
    <name evidence="1" type="primary">nfi</name>
    <name type="ordered locus">SPC_3999</name>
</gene>